<protein>
    <recommendedName>
        <fullName evidence="1">Large ribosomal subunit protein bL21</fullName>
    </recommendedName>
    <alternativeName>
        <fullName evidence="3">50S ribosomal protein L21</fullName>
    </alternativeName>
</protein>
<comment type="function">
    <text evidence="1">This protein binds to 23S rRNA in the presence of protein L20.</text>
</comment>
<comment type="subunit">
    <text evidence="1">Part of the 50S ribosomal subunit. Contacts protein L20.</text>
</comment>
<comment type="similarity">
    <text evidence="1">Belongs to the bacterial ribosomal protein bL21 family.</text>
</comment>
<gene>
    <name evidence="1" type="primary">rplU</name>
    <name type="ordered locus">blr0420</name>
</gene>
<feature type="chain" id="PRO_0000270644" description="Large ribosomal subunit protein bL21">
    <location>
        <begin position="1"/>
        <end position="129"/>
    </location>
</feature>
<feature type="region of interest" description="Disordered" evidence="2">
    <location>
        <begin position="102"/>
        <end position="129"/>
    </location>
</feature>
<feature type="compositionally biased region" description="Basic and acidic residues" evidence="2">
    <location>
        <begin position="116"/>
        <end position="129"/>
    </location>
</feature>
<accession>Q89X94</accession>
<reference key="1">
    <citation type="journal article" date="2002" name="DNA Res.">
        <title>Complete genomic sequence of nitrogen-fixing symbiotic bacterium Bradyrhizobium japonicum USDA110.</title>
        <authorList>
            <person name="Kaneko T."/>
            <person name="Nakamura Y."/>
            <person name="Sato S."/>
            <person name="Minamisawa K."/>
            <person name="Uchiumi T."/>
            <person name="Sasamoto S."/>
            <person name="Watanabe A."/>
            <person name="Idesawa K."/>
            <person name="Iriguchi M."/>
            <person name="Kawashima K."/>
            <person name="Kohara M."/>
            <person name="Matsumoto M."/>
            <person name="Shimpo S."/>
            <person name="Tsuruoka H."/>
            <person name="Wada T."/>
            <person name="Yamada M."/>
            <person name="Tabata S."/>
        </authorList>
    </citation>
    <scope>NUCLEOTIDE SEQUENCE [LARGE SCALE GENOMIC DNA]</scope>
    <source>
        <strain>JCM 10833 / BCRC 13528 / IAM 13628 / NBRC 14792 / USDA 110</strain>
    </source>
</reference>
<dbReference type="EMBL" id="BA000040">
    <property type="protein sequence ID" value="BAC45685.1"/>
    <property type="molecule type" value="Genomic_DNA"/>
</dbReference>
<dbReference type="RefSeq" id="NP_767060.1">
    <property type="nucleotide sequence ID" value="NC_004463.1"/>
</dbReference>
<dbReference type="RefSeq" id="WP_011083252.1">
    <property type="nucleotide sequence ID" value="NC_004463.1"/>
</dbReference>
<dbReference type="SMR" id="Q89X94"/>
<dbReference type="FunCoup" id="Q89X94">
    <property type="interactions" value="767"/>
</dbReference>
<dbReference type="STRING" id="224911.AAV28_41350"/>
<dbReference type="EnsemblBacteria" id="BAC45685">
    <property type="protein sequence ID" value="BAC45685"/>
    <property type="gene ID" value="BAC45685"/>
</dbReference>
<dbReference type="GeneID" id="46495566"/>
<dbReference type="KEGG" id="bja:blr0420"/>
<dbReference type="PATRIC" id="fig|224911.44.peg.8950"/>
<dbReference type="eggNOG" id="COG0261">
    <property type="taxonomic scope" value="Bacteria"/>
</dbReference>
<dbReference type="HOGENOM" id="CLU_061463_1_2_5"/>
<dbReference type="InParanoid" id="Q89X94"/>
<dbReference type="OrthoDB" id="9813334at2"/>
<dbReference type="PhylomeDB" id="Q89X94"/>
<dbReference type="Proteomes" id="UP000002526">
    <property type="component" value="Chromosome"/>
</dbReference>
<dbReference type="GO" id="GO:0005737">
    <property type="term" value="C:cytoplasm"/>
    <property type="evidence" value="ECO:0007669"/>
    <property type="project" value="UniProtKB-ARBA"/>
</dbReference>
<dbReference type="GO" id="GO:1990904">
    <property type="term" value="C:ribonucleoprotein complex"/>
    <property type="evidence" value="ECO:0007669"/>
    <property type="project" value="UniProtKB-KW"/>
</dbReference>
<dbReference type="GO" id="GO:0005840">
    <property type="term" value="C:ribosome"/>
    <property type="evidence" value="ECO:0007669"/>
    <property type="project" value="UniProtKB-KW"/>
</dbReference>
<dbReference type="GO" id="GO:0019843">
    <property type="term" value="F:rRNA binding"/>
    <property type="evidence" value="ECO:0007669"/>
    <property type="project" value="UniProtKB-UniRule"/>
</dbReference>
<dbReference type="GO" id="GO:0003735">
    <property type="term" value="F:structural constituent of ribosome"/>
    <property type="evidence" value="ECO:0000318"/>
    <property type="project" value="GO_Central"/>
</dbReference>
<dbReference type="GO" id="GO:0006412">
    <property type="term" value="P:translation"/>
    <property type="evidence" value="ECO:0007669"/>
    <property type="project" value="UniProtKB-UniRule"/>
</dbReference>
<dbReference type="HAMAP" id="MF_01363">
    <property type="entry name" value="Ribosomal_bL21"/>
    <property type="match status" value="1"/>
</dbReference>
<dbReference type="InterPro" id="IPR028909">
    <property type="entry name" value="bL21-like"/>
</dbReference>
<dbReference type="InterPro" id="IPR036164">
    <property type="entry name" value="bL21-like_sf"/>
</dbReference>
<dbReference type="InterPro" id="IPR001787">
    <property type="entry name" value="Ribosomal_bL21"/>
</dbReference>
<dbReference type="NCBIfam" id="TIGR00061">
    <property type="entry name" value="L21"/>
    <property type="match status" value="1"/>
</dbReference>
<dbReference type="PANTHER" id="PTHR21349">
    <property type="entry name" value="50S RIBOSOMAL PROTEIN L21"/>
    <property type="match status" value="1"/>
</dbReference>
<dbReference type="PANTHER" id="PTHR21349:SF0">
    <property type="entry name" value="LARGE RIBOSOMAL SUBUNIT PROTEIN BL21M"/>
    <property type="match status" value="1"/>
</dbReference>
<dbReference type="Pfam" id="PF00829">
    <property type="entry name" value="Ribosomal_L21p"/>
    <property type="match status" value="1"/>
</dbReference>
<dbReference type="SUPFAM" id="SSF141091">
    <property type="entry name" value="L21p-like"/>
    <property type="match status" value="1"/>
</dbReference>
<proteinExistence type="inferred from homology"/>
<keyword id="KW-1185">Reference proteome</keyword>
<keyword id="KW-0687">Ribonucleoprotein</keyword>
<keyword id="KW-0689">Ribosomal protein</keyword>
<keyword id="KW-0694">RNA-binding</keyword>
<keyword id="KW-0699">rRNA-binding</keyword>
<organism>
    <name type="scientific">Bradyrhizobium diazoefficiens (strain JCM 10833 / BCRC 13528 / IAM 13628 / NBRC 14792 / USDA 110)</name>
    <dbReference type="NCBI Taxonomy" id="224911"/>
    <lineage>
        <taxon>Bacteria</taxon>
        <taxon>Pseudomonadati</taxon>
        <taxon>Pseudomonadota</taxon>
        <taxon>Alphaproteobacteria</taxon>
        <taxon>Hyphomicrobiales</taxon>
        <taxon>Nitrobacteraceae</taxon>
        <taxon>Bradyrhizobium</taxon>
    </lineage>
</organism>
<name>RL21_BRADU</name>
<evidence type="ECO:0000255" key="1">
    <source>
        <dbReference type="HAMAP-Rule" id="MF_01363"/>
    </source>
</evidence>
<evidence type="ECO:0000256" key="2">
    <source>
        <dbReference type="SAM" id="MobiDB-lite"/>
    </source>
</evidence>
<evidence type="ECO:0000305" key="3"/>
<sequence>MFAVIKTGGRQYRVAPDDVLEVGKIEGEVGSIVQLNEVLVVGGDTPILGLPTVAGASVAVEVLDHKRGPKVIAFKKRRRKNSRRKRGYRDEITVLRVSEILTDNAKPTKGPRPKKEKVAKEATKEDAAA</sequence>